<reference key="1">
    <citation type="submission" date="2008-08" db="EMBL/GenBank/DDBJ databases">
        <title>Complete sequence of Anaeromyxobacter sp. K.</title>
        <authorList>
            <consortium name="US DOE Joint Genome Institute"/>
            <person name="Lucas S."/>
            <person name="Copeland A."/>
            <person name="Lapidus A."/>
            <person name="Glavina del Rio T."/>
            <person name="Dalin E."/>
            <person name="Tice H."/>
            <person name="Bruce D."/>
            <person name="Goodwin L."/>
            <person name="Pitluck S."/>
            <person name="Saunders E."/>
            <person name="Brettin T."/>
            <person name="Detter J.C."/>
            <person name="Han C."/>
            <person name="Larimer F."/>
            <person name="Land M."/>
            <person name="Hauser L."/>
            <person name="Kyrpides N."/>
            <person name="Ovchinnikiva G."/>
            <person name="Beliaev A."/>
        </authorList>
    </citation>
    <scope>NUCLEOTIDE SEQUENCE [LARGE SCALE GENOMIC DNA]</scope>
    <source>
        <strain>K</strain>
    </source>
</reference>
<name>RUVC_ANASK</name>
<evidence type="ECO:0000255" key="1">
    <source>
        <dbReference type="HAMAP-Rule" id="MF_00034"/>
    </source>
</evidence>
<organism>
    <name type="scientific">Anaeromyxobacter sp. (strain K)</name>
    <dbReference type="NCBI Taxonomy" id="447217"/>
    <lineage>
        <taxon>Bacteria</taxon>
        <taxon>Pseudomonadati</taxon>
        <taxon>Myxococcota</taxon>
        <taxon>Myxococcia</taxon>
        <taxon>Myxococcales</taxon>
        <taxon>Cystobacterineae</taxon>
        <taxon>Anaeromyxobacteraceae</taxon>
        <taxon>Anaeromyxobacter</taxon>
    </lineage>
</organism>
<feature type="chain" id="PRO_1000090501" description="Crossover junction endodeoxyribonuclease RuvC">
    <location>
        <begin position="1"/>
        <end position="185"/>
    </location>
</feature>
<feature type="active site" evidence="1">
    <location>
        <position position="7"/>
    </location>
</feature>
<feature type="active site" evidence="1">
    <location>
        <position position="66"/>
    </location>
</feature>
<feature type="active site" evidence="1">
    <location>
        <position position="137"/>
    </location>
</feature>
<feature type="binding site" evidence="1">
    <location>
        <position position="7"/>
    </location>
    <ligand>
        <name>Mg(2+)</name>
        <dbReference type="ChEBI" id="CHEBI:18420"/>
        <label>1</label>
    </ligand>
</feature>
<feature type="binding site" evidence="1">
    <location>
        <position position="66"/>
    </location>
    <ligand>
        <name>Mg(2+)</name>
        <dbReference type="ChEBI" id="CHEBI:18420"/>
        <label>2</label>
    </ligand>
</feature>
<feature type="binding site" evidence="1">
    <location>
        <position position="137"/>
    </location>
    <ligand>
        <name>Mg(2+)</name>
        <dbReference type="ChEBI" id="CHEBI:18420"/>
        <label>1</label>
    </ligand>
</feature>
<comment type="function">
    <text evidence="1">The RuvA-RuvB-RuvC complex processes Holliday junction (HJ) DNA during genetic recombination and DNA repair. Endonuclease that resolves HJ intermediates. Cleaves cruciform DNA by making single-stranded nicks across the HJ at symmetrical positions within the homologous arms, yielding a 5'-phosphate and a 3'-hydroxyl group; requires a central core of homology in the junction. The consensus cleavage sequence is 5'-(A/T)TT(C/G)-3'. Cleavage occurs on the 3'-side of the TT dinucleotide at the point of strand exchange. HJ branch migration catalyzed by RuvA-RuvB allows RuvC to scan DNA until it finds its consensus sequence, where it cleaves and resolves the cruciform DNA.</text>
</comment>
<comment type="catalytic activity">
    <reaction evidence="1">
        <text>Endonucleolytic cleavage at a junction such as a reciprocal single-stranded crossover between two homologous DNA duplexes (Holliday junction).</text>
        <dbReference type="EC" id="3.1.21.10"/>
    </reaction>
</comment>
<comment type="cofactor">
    <cofactor evidence="1">
        <name>Mg(2+)</name>
        <dbReference type="ChEBI" id="CHEBI:18420"/>
    </cofactor>
    <text evidence="1">Binds 2 Mg(2+) ion per subunit.</text>
</comment>
<comment type="subunit">
    <text evidence="1">Homodimer which binds Holliday junction (HJ) DNA. The HJ becomes 2-fold symmetrical on binding to RuvC with unstacked arms; it has a different conformation from HJ DNA in complex with RuvA. In the full resolvosome a probable DNA-RuvA(4)-RuvB(12)-RuvC(2) complex forms which resolves the HJ.</text>
</comment>
<comment type="subcellular location">
    <subcellularLocation>
        <location evidence="1">Cytoplasm</location>
    </subcellularLocation>
</comment>
<comment type="similarity">
    <text evidence="1">Belongs to the RuvC family.</text>
</comment>
<accession>B4UFX9</accession>
<keyword id="KW-0963">Cytoplasm</keyword>
<keyword id="KW-0227">DNA damage</keyword>
<keyword id="KW-0233">DNA recombination</keyword>
<keyword id="KW-0234">DNA repair</keyword>
<keyword id="KW-0238">DNA-binding</keyword>
<keyword id="KW-0255">Endonuclease</keyword>
<keyword id="KW-0378">Hydrolase</keyword>
<keyword id="KW-0460">Magnesium</keyword>
<keyword id="KW-0479">Metal-binding</keyword>
<keyword id="KW-0540">Nuclease</keyword>
<proteinExistence type="inferred from homology"/>
<dbReference type="EC" id="3.1.21.10" evidence="1"/>
<dbReference type="EMBL" id="CP001131">
    <property type="protein sequence ID" value="ACG72247.1"/>
    <property type="molecule type" value="Genomic_DNA"/>
</dbReference>
<dbReference type="RefSeq" id="WP_012525074.1">
    <property type="nucleotide sequence ID" value="NC_011145.1"/>
</dbReference>
<dbReference type="SMR" id="B4UFX9"/>
<dbReference type="KEGG" id="ank:AnaeK_1012"/>
<dbReference type="HOGENOM" id="CLU_091257_2_1_7"/>
<dbReference type="OrthoDB" id="9805499at2"/>
<dbReference type="Proteomes" id="UP000001871">
    <property type="component" value="Chromosome"/>
</dbReference>
<dbReference type="GO" id="GO:0005737">
    <property type="term" value="C:cytoplasm"/>
    <property type="evidence" value="ECO:0007669"/>
    <property type="project" value="UniProtKB-SubCell"/>
</dbReference>
<dbReference type="GO" id="GO:0048476">
    <property type="term" value="C:Holliday junction resolvase complex"/>
    <property type="evidence" value="ECO:0007669"/>
    <property type="project" value="UniProtKB-UniRule"/>
</dbReference>
<dbReference type="GO" id="GO:0008821">
    <property type="term" value="F:crossover junction DNA endonuclease activity"/>
    <property type="evidence" value="ECO:0007669"/>
    <property type="project" value="UniProtKB-UniRule"/>
</dbReference>
<dbReference type="GO" id="GO:0003677">
    <property type="term" value="F:DNA binding"/>
    <property type="evidence" value="ECO:0007669"/>
    <property type="project" value="UniProtKB-KW"/>
</dbReference>
<dbReference type="GO" id="GO:0000287">
    <property type="term" value="F:magnesium ion binding"/>
    <property type="evidence" value="ECO:0007669"/>
    <property type="project" value="UniProtKB-UniRule"/>
</dbReference>
<dbReference type="GO" id="GO:0006310">
    <property type="term" value="P:DNA recombination"/>
    <property type="evidence" value="ECO:0007669"/>
    <property type="project" value="UniProtKB-UniRule"/>
</dbReference>
<dbReference type="GO" id="GO:0006281">
    <property type="term" value="P:DNA repair"/>
    <property type="evidence" value="ECO:0007669"/>
    <property type="project" value="UniProtKB-UniRule"/>
</dbReference>
<dbReference type="CDD" id="cd16962">
    <property type="entry name" value="RuvC"/>
    <property type="match status" value="1"/>
</dbReference>
<dbReference type="FunFam" id="3.30.420.10:FF:000002">
    <property type="entry name" value="Crossover junction endodeoxyribonuclease RuvC"/>
    <property type="match status" value="1"/>
</dbReference>
<dbReference type="Gene3D" id="3.30.420.10">
    <property type="entry name" value="Ribonuclease H-like superfamily/Ribonuclease H"/>
    <property type="match status" value="1"/>
</dbReference>
<dbReference type="HAMAP" id="MF_00034">
    <property type="entry name" value="RuvC"/>
    <property type="match status" value="1"/>
</dbReference>
<dbReference type="InterPro" id="IPR012337">
    <property type="entry name" value="RNaseH-like_sf"/>
</dbReference>
<dbReference type="InterPro" id="IPR036397">
    <property type="entry name" value="RNaseH_sf"/>
</dbReference>
<dbReference type="InterPro" id="IPR002176">
    <property type="entry name" value="X-over_junc_endoDNase_RuvC"/>
</dbReference>
<dbReference type="NCBIfam" id="TIGR00228">
    <property type="entry name" value="ruvC"/>
    <property type="match status" value="1"/>
</dbReference>
<dbReference type="PANTHER" id="PTHR30194">
    <property type="entry name" value="CROSSOVER JUNCTION ENDODEOXYRIBONUCLEASE RUVC"/>
    <property type="match status" value="1"/>
</dbReference>
<dbReference type="PANTHER" id="PTHR30194:SF3">
    <property type="entry name" value="CROSSOVER JUNCTION ENDODEOXYRIBONUCLEASE RUVC"/>
    <property type="match status" value="1"/>
</dbReference>
<dbReference type="Pfam" id="PF02075">
    <property type="entry name" value="RuvC"/>
    <property type="match status" value="1"/>
</dbReference>
<dbReference type="PRINTS" id="PR00696">
    <property type="entry name" value="RSOLVASERUVC"/>
</dbReference>
<dbReference type="SUPFAM" id="SSF53098">
    <property type="entry name" value="Ribonuclease H-like"/>
    <property type="match status" value="1"/>
</dbReference>
<protein>
    <recommendedName>
        <fullName evidence="1">Crossover junction endodeoxyribonuclease RuvC</fullName>
        <ecNumber evidence="1">3.1.21.10</ecNumber>
    </recommendedName>
    <alternativeName>
        <fullName evidence="1">Holliday junction nuclease RuvC</fullName>
    </alternativeName>
    <alternativeName>
        <fullName evidence="1">Holliday junction resolvase RuvC</fullName>
    </alternativeName>
</protein>
<sequence>MIVLGIDPGSRRCGYGVVAREGARLTVVESGVLVPGDLPMAQRLGRILEGLDALIARARPVEASVESVFSGASPRSALVLGQARGVALAAAARAGLPVFEYAPSEVKLAFTGNGRAGKDQMLRTARMLLGAAPDLSDEADALAIAVCHLARRAFAVPAAGAGRAAAARAAAARLRPSRRDHRGTP</sequence>
<gene>
    <name evidence="1" type="primary">ruvC</name>
    <name type="ordered locus">AnaeK_1012</name>
</gene>